<gene>
    <name evidence="2" type="primary">AQP2</name>
</gene>
<comment type="function">
    <text evidence="2">Forms a water-specific channel that provides the plasma membranes of renal collecting duct with high permeability to water, thereby permitting water to move in the direction of an osmotic gradient. Plays an essential role in renal water homeostasis. Could also be permeable to glycerol.</text>
</comment>
<comment type="catalytic activity">
    <reaction evidence="2">
        <text>H2O(in) = H2O(out)</text>
        <dbReference type="Rhea" id="RHEA:29667"/>
        <dbReference type="ChEBI" id="CHEBI:15377"/>
    </reaction>
</comment>
<comment type="catalytic activity">
    <reaction evidence="2">
        <text>glycerol(in) = glycerol(out)</text>
        <dbReference type="Rhea" id="RHEA:29675"/>
        <dbReference type="ChEBI" id="CHEBI:17754"/>
    </reaction>
</comment>
<comment type="subunit">
    <text evidence="2">Homotetramer.</text>
</comment>
<comment type="subcellular location">
    <subcellularLocation>
        <location evidence="2">Apical cell membrane</location>
        <topology evidence="2">Multi-pass membrane protein</topology>
    </subcellularLocation>
    <subcellularLocation>
        <location evidence="1">Basolateral cell membrane</location>
        <topology evidence="2">Multi-pass membrane protein</topology>
    </subcellularLocation>
    <subcellularLocation>
        <location evidence="2">Cell membrane</location>
        <topology evidence="2">Multi-pass membrane protein</topology>
    </subcellularLocation>
    <subcellularLocation>
        <location evidence="2">Cytoplasmic vesicle membrane</location>
        <topology evidence="2">Multi-pass membrane protein</topology>
    </subcellularLocation>
    <subcellularLocation>
        <location evidence="2">Golgi apparatus</location>
        <location evidence="2">trans-Golgi network membrane</location>
        <topology evidence="2">Multi-pass membrane protein</topology>
    </subcellularLocation>
    <text evidence="2">Shuttles from vesicles to the apical membrane. Vasopressin-regulated phosphorylation is required for translocation to the apical cell membrane. PLEKHA8/FAPP2 is required to transport AQP2 from the TGN to sites where AQP2 is phosphorylated.</text>
</comment>
<comment type="domain">
    <text evidence="2">Aquaporins contain two tandem repeats each containing three membrane-spanning domains and a pore-forming loop with the signature motif Asn-Pro-Ala (NPA).</text>
</comment>
<comment type="PTM">
    <text evidence="2">Serine phosphorylation is necessary and sufficient for expression at the apical membrane. Endocytosis is not phosphorylation-dependent.</text>
</comment>
<comment type="PTM">
    <text evidence="2">N-glycosylated.</text>
</comment>
<comment type="similarity">
    <text evidence="4">Belongs to the MIP/aquaporin (TC 1.A.8) family.</text>
</comment>
<evidence type="ECO:0000250" key="1">
    <source>
        <dbReference type="UniProtKB" id="P34080"/>
    </source>
</evidence>
<evidence type="ECO:0000250" key="2">
    <source>
        <dbReference type="UniProtKB" id="P41181"/>
    </source>
</evidence>
<evidence type="ECO:0000303" key="3">
    <source>
    </source>
</evidence>
<evidence type="ECO:0000305" key="4"/>
<protein>
    <recommendedName>
        <fullName evidence="3">Aquaporin-2</fullName>
        <shortName>AQP-2</shortName>
    </recommendedName>
    <alternativeName>
        <fullName>ADH water channel</fullName>
    </alternativeName>
    <alternativeName>
        <fullName>Aquaporin-CD</fullName>
        <shortName>AQP-CD</shortName>
    </alternativeName>
    <alternativeName>
        <fullName>Collecting duct water channel protein</fullName>
    </alternativeName>
    <alternativeName>
        <fullName>WCH-CD</fullName>
    </alternativeName>
    <alternativeName>
        <fullName>Water channel protein for renal collecting duct</fullName>
    </alternativeName>
</protein>
<dbReference type="EMBL" id="Y10636">
    <property type="protein sequence ID" value="CAA71661.1"/>
    <property type="molecule type" value="Genomic_DNA"/>
</dbReference>
<dbReference type="SMR" id="P79213"/>
<dbReference type="STRING" id="9986.ENSOCUP00000047709"/>
<dbReference type="PaxDb" id="9986-ENSOCUP00000021179"/>
<dbReference type="eggNOG" id="KOG0223">
    <property type="taxonomic scope" value="Eukaryota"/>
</dbReference>
<dbReference type="InParanoid" id="P79213"/>
<dbReference type="Proteomes" id="UP000001811">
    <property type="component" value="Unplaced"/>
</dbReference>
<dbReference type="GO" id="GO:0016324">
    <property type="term" value="C:apical plasma membrane"/>
    <property type="evidence" value="ECO:0000250"/>
    <property type="project" value="UniProtKB"/>
</dbReference>
<dbReference type="GO" id="GO:0016323">
    <property type="term" value="C:basolateral plasma membrane"/>
    <property type="evidence" value="ECO:0007669"/>
    <property type="project" value="UniProtKB-SubCell"/>
</dbReference>
<dbReference type="GO" id="GO:0030659">
    <property type="term" value="C:cytoplasmic vesicle membrane"/>
    <property type="evidence" value="ECO:0007669"/>
    <property type="project" value="UniProtKB-SubCell"/>
</dbReference>
<dbReference type="GO" id="GO:0005794">
    <property type="term" value="C:Golgi apparatus"/>
    <property type="evidence" value="ECO:0007669"/>
    <property type="project" value="UniProtKB-SubCell"/>
</dbReference>
<dbReference type="GO" id="GO:0005886">
    <property type="term" value="C:plasma membrane"/>
    <property type="evidence" value="ECO:0000250"/>
    <property type="project" value="UniProtKB"/>
</dbReference>
<dbReference type="GO" id="GO:0015250">
    <property type="term" value="F:water channel activity"/>
    <property type="evidence" value="ECO:0000250"/>
    <property type="project" value="UniProtKB"/>
</dbReference>
<dbReference type="GO" id="GO:0051289">
    <property type="term" value="P:protein homotetramerization"/>
    <property type="evidence" value="ECO:0000250"/>
    <property type="project" value="UniProtKB"/>
</dbReference>
<dbReference type="GO" id="GO:0006833">
    <property type="term" value="P:water transport"/>
    <property type="evidence" value="ECO:0000250"/>
    <property type="project" value="UniProtKB"/>
</dbReference>
<dbReference type="FunFam" id="1.20.1080.10:FF:000032">
    <property type="entry name" value="Aquaporin-2"/>
    <property type="match status" value="1"/>
</dbReference>
<dbReference type="Gene3D" id="1.20.1080.10">
    <property type="entry name" value="Glycerol uptake facilitator protein"/>
    <property type="match status" value="1"/>
</dbReference>
<dbReference type="InterPro" id="IPR023271">
    <property type="entry name" value="Aquaporin-like"/>
</dbReference>
<dbReference type="InterPro" id="IPR034294">
    <property type="entry name" value="Aquaporin_transptr"/>
</dbReference>
<dbReference type="InterPro" id="IPR000425">
    <property type="entry name" value="MIP"/>
</dbReference>
<dbReference type="InterPro" id="IPR022357">
    <property type="entry name" value="MIP_CS"/>
</dbReference>
<dbReference type="PANTHER" id="PTHR19139">
    <property type="entry name" value="AQUAPORIN TRANSPORTER"/>
    <property type="match status" value="1"/>
</dbReference>
<dbReference type="PANTHER" id="PTHR19139:SF45">
    <property type="entry name" value="AQUAPORIN-2"/>
    <property type="match status" value="1"/>
</dbReference>
<dbReference type="Pfam" id="PF00230">
    <property type="entry name" value="MIP"/>
    <property type="match status" value="1"/>
</dbReference>
<dbReference type="PRINTS" id="PR02014">
    <property type="entry name" value="AQUAPORIN2"/>
</dbReference>
<dbReference type="PRINTS" id="PR00783">
    <property type="entry name" value="MINTRINSICP"/>
</dbReference>
<dbReference type="SUPFAM" id="SSF81338">
    <property type="entry name" value="Aquaporin-like"/>
    <property type="match status" value="1"/>
</dbReference>
<dbReference type="PROSITE" id="PS00221">
    <property type="entry name" value="MIP"/>
    <property type="match status" value="1"/>
</dbReference>
<reference key="1">
    <citation type="journal article" date="1997" name="Mol. Biol. Evol.">
        <title>Molecular evolution of mammalian aquaporin-2: further evidence that elephant shrew and aardvark join the paenungulate clade.</title>
        <authorList>
            <person name="Madsen O.J."/>
            <person name="Deen P.M.T."/>
            <person name="Pesole G."/>
            <person name="Saccone C."/>
            <person name="de Jong W.W."/>
        </authorList>
    </citation>
    <scope>NUCLEOTIDE SEQUENCE [GENOMIC DNA]</scope>
</reference>
<accession>P79213</accession>
<name>AQP2_RABIT</name>
<feature type="chain" id="PRO_0000063939" description="Aquaporin-2">
    <location>
        <begin position="1" status="less than"/>
        <end position="109" status="greater than"/>
    </location>
</feature>
<feature type="topological domain" description="Cytoplasmic" evidence="4">
    <location>
        <begin position="1" status="less than"/>
        <end position="6"/>
    </location>
</feature>
<feature type="transmembrane region" description="Helical" evidence="2">
    <location>
        <begin position="7"/>
        <end position="27"/>
    </location>
</feature>
<feature type="topological domain" description="Extracellular" evidence="4">
    <location>
        <begin position="28"/>
        <end position="35"/>
    </location>
</feature>
<feature type="transmembrane region" description="Helical" evidence="2">
    <location>
        <begin position="36"/>
        <end position="54"/>
    </location>
</feature>
<feature type="topological domain" description="Cytoplasmic" evidence="4">
    <location>
        <begin position="55"/>
        <end position="59"/>
    </location>
</feature>
<feature type="intramembrane region" description="Discontinuously helical" evidence="2">
    <location>
        <begin position="60"/>
        <end position="69"/>
    </location>
</feature>
<feature type="topological domain" description="Cytoplasmic" evidence="4">
    <location>
        <begin position="70"/>
        <end position="80"/>
    </location>
</feature>
<feature type="transmembrane region" description="Helical" evidence="2">
    <location>
        <begin position="81"/>
        <end position="102"/>
    </location>
</feature>
<feature type="topological domain" description="Extracellular" evidence="4">
    <location>
        <begin position="103"/>
        <end position="109" status="greater than"/>
    </location>
</feature>
<feature type="short sequence motif" description="NPA 1" evidence="2">
    <location>
        <begin position="63"/>
        <end position="65"/>
    </location>
</feature>
<feature type="non-terminal residue">
    <location>
        <position position="1"/>
    </location>
</feature>
<feature type="non-terminal residue">
    <location>
        <position position="109"/>
    </location>
</feature>
<organism>
    <name type="scientific">Oryctolagus cuniculus</name>
    <name type="common">Rabbit</name>
    <dbReference type="NCBI Taxonomy" id="9986"/>
    <lineage>
        <taxon>Eukaryota</taxon>
        <taxon>Metazoa</taxon>
        <taxon>Chordata</taxon>
        <taxon>Craniata</taxon>
        <taxon>Vertebrata</taxon>
        <taxon>Euteleostomi</taxon>
        <taxon>Mammalia</taxon>
        <taxon>Eutheria</taxon>
        <taxon>Euarchontoglires</taxon>
        <taxon>Glires</taxon>
        <taxon>Lagomorpha</taxon>
        <taxon>Leporidae</taxon>
        <taxon>Oryctolagus</taxon>
    </lineage>
</organism>
<sequence length="109" mass="11137">SIAFSRAVFAEFLATLLFVFFGLGSALNWPSALPSTLQIAMAFGLGIGTLVQALGHVSGAHINPAVTVACLVGCHVSFLRAAFYVAAQLLGAVAGAALLHEITPAEVRG</sequence>
<keyword id="KW-1003">Cell membrane</keyword>
<keyword id="KW-0968">Cytoplasmic vesicle</keyword>
<keyword id="KW-0325">Glycoprotein</keyword>
<keyword id="KW-0333">Golgi apparatus</keyword>
<keyword id="KW-0472">Membrane</keyword>
<keyword id="KW-0597">Phosphoprotein</keyword>
<keyword id="KW-1185">Reference proteome</keyword>
<keyword id="KW-0812">Transmembrane</keyword>
<keyword id="KW-1133">Transmembrane helix</keyword>
<keyword id="KW-0813">Transport</keyword>
<proteinExistence type="inferred from homology"/>